<comment type="function">
    <text evidence="1">Aspartyl-tRNA synthetase with relaxed tRNA specificity since it is able to aspartylate not only its cognate tRNA(Asp) but also tRNA(Asn). Reaction proceeds in two steps: L-aspartate is first activated by ATP to form Asp-AMP and then transferred to the acceptor end of tRNA(Asp/Asn).</text>
</comment>
<comment type="catalytic activity">
    <reaction evidence="1">
        <text>tRNA(Asx) + L-aspartate + ATP = L-aspartyl-tRNA(Asx) + AMP + diphosphate</text>
        <dbReference type="Rhea" id="RHEA:18349"/>
        <dbReference type="Rhea" id="RHEA-COMP:9710"/>
        <dbReference type="Rhea" id="RHEA-COMP:9711"/>
        <dbReference type="ChEBI" id="CHEBI:29991"/>
        <dbReference type="ChEBI" id="CHEBI:30616"/>
        <dbReference type="ChEBI" id="CHEBI:33019"/>
        <dbReference type="ChEBI" id="CHEBI:78442"/>
        <dbReference type="ChEBI" id="CHEBI:78516"/>
        <dbReference type="ChEBI" id="CHEBI:456215"/>
        <dbReference type="EC" id="6.1.1.23"/>
    </reaction>
</comment>
<comment type="subunit">
    <text evidence="1">Homodimer.</text>
</comment>
<comment type="subcellular location">
    <subcellularLocation>
        <location evidence="1">Cytoplasm</location>
    </subcellularLocation>
</comment>
<comment type="similarity">
    <text evidence="1">Belongs to the class-II aminoacyl-tRNA synthetase family. Type 1 subfamily.</text>
</comment>
<reference key="1">
    <citation type="submission" date="2007-12" db="EMBL/GenBank/DDBJ databases">
        <title>Complete sequence of chromosome of Francisella philomiragia subsp. philomiragia ATCC 25017.</title>
        <authorList>
            <consortium name="US DOE Joint Genome Institute"/>
            <person name="Copeland A."/>
            <person name="Lucas S."/>
            <person name="Lapidus A."/>
            <person name="Barry K."/>
            <person name="Detter J.C."/>
            <person name="Glavina del Rio T."/>
            <person name="Hammon N."/>
            <person name="Israni S."/>
            <person name="Dalin E."/>
            <person name="Tice H."/>
            <person name="Pitluck S."/>
            <person name="Chain P."/>
            <person name="Malfatti S."/>
            <person name="Shin M."/>
            <person name="Vergez L."/>
            <person name="Schmutz J."/>
            <person name="Larimer F."/>
            <person name="Land M."/>
            <person name="Hauser L."/>
            <person name="Richardson P."/>
        </authorList>
    </citation>
    <scope>NUCLEOTIDE SEQUENCE [LARGE SCALE GENOMIC DNA]</scope>
    <source>
        <strain>ATCC 25017 / CCUG 19701 / FSC 153 / O#319-036</strain>
    </source>
</reference>
<protein>
    <recommendedName>
        <fullName evidence="1">Aspartate--tRNA(Asp/Asn) ligase</fullName>
        <ecNumber evidence="1">6.1.1.23</ecNumber>
    </recommendedName>
    <alternativeName>
        <fullName evidence="1">Aspartyl-tRNA synthetase</fullName>
        <shortName evidence="1">AspRS</shortName>
    </alternativeName>
    <alternativeName>
        <fullName evidence="1">Non-discriminating aspartyl-tRNA synthetase</fullName>
        <shortName evidence="1">ND-AspRS</shortName>
    </alternativeName>
</protein>
<evidence type="ECO:0000255" key="1">
    <source>
        <dbReference type="HAMAP-Rule" id="MF_00044"/>
    </source>
</evidence>
<gene>
    <name evidence="1" type="primary">aspS</name>
    <name type="ordered locus">Fphi_0695</name>
</gene>
<feature type="chain" id="PRO_1000074704" description="Aspartate--tRNA(Asp/Asn) ligase">
    <location>
        <begin position="1"/>
        <end position="589"/>
    </location>
</feature>
<feature type="region of interest" description="Aspartate" evidence="1">
    <location>
        <begin position="196"/>
        <end position="199"/>
    </location>
</feature>
<feature type="binding site" evidence="1">
    <location>
        <position position="172"/>
    </location>
    <ligand>
        <name>L-aspartate</name>
        <dbReference type="ChEBI" id="CHEBI:29991"/>
    </ligand>
</feature>
<feature type="binding site" evidence="1">
    <location>
        <begin position="218"/>
        <end position="220"/>
    </location>
    <ligand>
        <name>ATP</name>
        <dbReference type="ChEBI" id="CHEBI:30616"/>
    </ligand>
</feature>
<feature type="binding site" evidence="1">
    <location>
        <position position="218"/>
    </location>
    <ligand>
        <name>L-aspartate</name>
        <dbReference type="ChEBI" id="CHEBI:29991"/>
    </ligand>
</feature>
<feature type="binding site" evidence="1">
    <location>
        <position position="227"/>
    </location>
    <ligand>
        <name>ATP</name>
        <dbReference type="ChEBI" id="CHEBI:30616"/>
    </ligand>
</feature>
<feature type="binding site" evidence="1">
    <location>
        <position position="449"/>
    </location>
    <ligand>
        <name>L-aspartate</name>
        <dbReference type="ChEBI" id="CHEBI:29991"/>
    </ligand>
</feature>
<feature type="binding site" evidence="1">
    <location>
        <position position="483"/>
    </location>
    <ligand>
        <name>ATP</name>
        <dbReference type="ChEBI" id="CHEBI:30616"/>
    </ligand>
</feature>
<feature type="binding site" evidence="1">
    <location>
        <position position="490"/>
    </location>
    <ligand>
        <name>L-aspartate</name>
        <dbReference type="ChEBI" id="CHEBI:29991"/>
    </ligand>
</feature>
<feature type="binding site" evidence="1">
    <location>
        <begin position="535"/>
        <end position="538"/>
    </location>
    <ligand>
        <name>ATP</name>
        <dbReference type="ChEBI" id="CHEBI:30616"/>
    </ligand>
</feature>
<feature type="site" description="Important for tRNA non-discrimination" evidence="1">
    <location>
        <position position="30"/>
    </location>
</feature>
<feature type="site" description="Important for tRNA non-discrimination" evidence="1">
    <location>
        <position position="80"/>
    </location>
</feature>
<keyword id="KW-0030">Aminoacyl-tRNA synthetase</keyword>
<keyword id="KW-0067">ATP-binding</keyword>
<keyword id="KW-0963">Cytoplasm</keyword>
<keyword id="KW-0436">Ligase</keyword>
<keyword id="KW-0547">Nucleotide-binding</keyword>
<keyword id="KW-0648">Protein biosynthesis</keyword>
<sequence>MRTHYSSDVNEKLQNQKVTICGWVHRRRDHGGVIFLDIRDRTGLVQLVFNPESKAFKVADSLRGEYVIKATGTVNLRPEGQENKNLASGKVEIIGEDLEIVNKSKTIPFQLDDFQSTGEDVKLKYRYIDLRRPEMQNKLITRSKAIRYVRNFLDNNGFLDIETPFLTKATPEGARDYLVPSRNFNGKFYALPQSPQLFKQLLMVSGFDRYYQVVKCFRDEDLRADRQPEFTQIDIEASFIDEAFIMSTMEKMIAGLFDATIGVKFDTPFQVMTYAEAMDKYGSDKPDLRIPLEFVNIKEDMKNEEFKVFSGPANDPEARVVAMRVPGGNDKLSRKKIDEYTKFVGIYGARGLAYIKINSLSEGKEGLQSPIVKNISEETLFKVIEKTGAQVGDVLFFGAAKAKIVNDSMGALRAKIGEDFEIFTKDWAPLWVVDFPMFEKDDNRLYAVHHPFTAPKVDTVEELTKDPENLLSRAYDMVINGYEVGGGSIRIHRQDMQAKVFNLLGISDEEAREKFGFMLDALSYGTPIHGGIAFGVDRLIMLLTNTTNIRDVIAFPKTQTASCLMTEAPSNVSLEQLNELGIAVKKEDK</sequence>
<proteinExistence type="inferred from homology"/>
<name>SYDND_FRAP2</name>
<organism>
    <name type="scientific">Francisella philomiragia subsp. philomiragia (strain ATCC 25017 / CCUG 19701 / FSC 153 / O#319-036)</name>
    <dbReference type="NCBI Taxonomy" id="484022"/>
    <lineage>
        <taxon>Bacteria</taxon>
        <taxon>Pseudomonadati</taxon>
        <taxon>Pseudomonadota</taxon>
        <taxon>Gammaproteobacteria</taxon>
        <taxon>Thiotrichales</taxon>
        <taxon>Francisellaceae</taxon>
        <taxon>Francisella</taxon>
    </lineage>
</organism>
<dbReference type="EC" id="6.1.1.23" evidence="1"/>
<dbReference type="EMBL" id="CP000937">
    <property type="protein sequence ID" value="ABZ86916.1"/>
    <property type="molecule type" value="Genomic_DNA"/>
</dbReference>
<dbReference type="SMR" id="B0TW08"/>
<dbReference type="KEGG" id="fph:Fphi_0695"/>
<dbReference type="eggNOG" id="COG0173">
    <property type="taxonomic scope" value="Bacteria"/>
</dbReference>
<dbReference type="HOGENOM" id="CLU_014330_3_2_6"/>
<dbReference type="GO" id="GO:0005737">
    <property type="term" value="C:cytoplasm"/>
    <property type="evidence" value="ECO:0007669"/>
    <property type="project" value="UniProtKB-SubCell"/>
</dbReference>
<dbReference type="GO" id="GO:0004815">
    <property type="term" value="F:aspartate-tRNA ligase activity"/>
    <property type="evidence" value="ECO:0007669"/>
    <property type="project" value="UniProtKB-UniRule"/>
</dbReference>
<dbReference type="GO" id="GO:0050560">
    <property type="term" value="F:aspartate-tRNA(Asn) ligase activity"/>
    <property type="evidence" value="ECO:0007669"/>
    <property type="project" value="UniProtKB-EC"/>
</dbReference>
<dbReference type="GO" id="GO:0005524">
    <property type="term" value="F:ATP binding"/>
    <property type="evidence" value="ECO:0007669"/>
    <property type="project" value="UniProtKB-UniRule"/>
</dbReference>
<dbReference type="GO" id="GO:0003676">
    <property type="term" value="F:nucleic acid binding"/>
    <property type="evidence" value="ECO:0007669"/>
    <property type="project" value="InterPro"/>
</dbReference>
<dbReference type="GO" id="GO:0006422">
    <property type="term" value="P:aspartyl-tRNA aminoacylation"/>
    <property type="evidence" value="ECO:0007669"/>
    <property type="project" value="UniProtKB-UniRule"/>
</dbReference>
<dbReference type="CDD" id="cd00777">
    <property type="entry name" value="AspRS_core"/>
    <property type="match status" value="1"/>
</dbReference>
<dbReference type="CDD" id="cd04317">
    <property type="entry name" value="EcAspRS_like_N"/>
    <property type="match status" value="1"/>
</dbReference>
<dbReference type="Gene3D" id="3.30.930.10">
    <property type="entry name" value="Bira Bifunctional Protein, Domain 2"/>
    <property type="match status" value="1"/>
</dbReference>
<dbReference type="Gene3D" id="3.30.1360.30">
    <property type="entry name" value="GAD-like domain"/>
    <property type="match status" value="1"/>
</dbReference>
<dbReference type="Gene3D" id="2.40.50.140">
    <property type="entry name" value="Nucleic acid-binding proteins"/>
    <property type="match status" value="1"/>
</dbReference>
<dbReference type="HAMAP" id="MF_00044">
    <property type="entry name" value="Asp_tRNA_synth_type1"/>
    <property type="match status" value="1"/>
</dbReference>
<dbReference type="InterPro" id="IPR004364">
    <property type="entry name" value="Aa-tRNA-synt_II"/>
</dbReference>
<dbReference type="InterPro" id="IPR006195">
    <property type="entry name" value="aa-tRNA-synth_II"/>
</dbReference>
<dbReference type="InterPro" id="IPR045864">
    <property type="entry name" value="aa-tRNA-synth_II/BPL/LPL"/>
</dbReference>
<dbReference type="InterPro" id="IPR004524">
    <property type="entry name" value="Asp-tRNA-ligase_1"/>
</dbReference>
<dbReference type="InterPro" id="IPR047089">
    <property type="entry name" value="Asp-tRNA-ligase_1_N"/>
</dbReference>
<dbReference type="InterPro" id="IPR002312">
    <property type="entry name" value="Asp/Asn-tRNA-synth_IIb"/>
</dbReference>
<dbReference type="InterPro" id="IPR047090">
    <property type="entry name" value="AspRS_core"/>
</dbReference>
<dbReference type="InterPro" id="IPR004115">
    <property type="entry name" value="GAD-like_sf"/>
</dbReference>
<dbReference type="InterPro" id="IPR029351">
    <property type="entry name" value="GAD_dom"/>
</dbReference>
<dbReference type="InterPro" id="IPR012340">
    <property type="entry name" value="NA-bd_OB-fold"/>
</dbReference>
<dbReference type="InterPro" id="IPR004365">
    <property type="entry name" value="NA-bd_OB_tRNA"/>
</dbReference>
<dbReference type="NCBIfam" id="TIGR00459">
    <property type="entry name" value="aspS_bact"/>
    <property type="match status" value="1"/>
</dbReference>
<dbReference type="NCBIfam" id="NF001750">
    <property type="entry name" value="PRK00476.1"/>
    <property type="match status" value="1"/>
</dbReference>
<dbReference type="PANTHER" id="PTHR22594:SF5">
    <property type="entry name" value="ASPARTATE--TRNA LIGASE, MITOCHONDRIAL"/>
    <property type="match status" value="1"/>
</dbReference>
<dbReference type="PANTHER" id="PTHR22594">
    <property type="entry name" value="ASPARTYL/LYSYL-TRNA SYNTHETASE"/>
    <property type="match status" value="1"/>
</dbReference>
<dbReference type="Pfam" id="PF02938">
    <property type="entry name" value="GAD"/>
    <property type="match status" value="1"/>
</dbReference>
<dbReference type="Pfam" id="PF00152">
    <property type="entry name" value="tRNA-synt_2"/>
    <property type="match status" value="1"/>
</dbReference>
<dbReference type="Pfam" id="PF01336">
    <property type="entry name" value="tRNA_anti-codon"/>
    <property type="match status" value="1"/>
</dbReference>
<dbReference type="PRINTS" id="PR01042">
    <property type="entry name" value="TRNASYNTHASP"/>
</dbReference>
<dbReference type="SUPFAM" id="SSF55681">
    <property type="entry name" value="Class II aaRS and biotin synthetases"/>
    <property type="match status" value="1"/>
</dbReference>
<dbReference type="SUPFAM" id="SSF55261">
    <property type="entry name" value="GAD domain-like"/>
    <property type="match status" value="1"/>
</dbReference>
<dbReference type="SUPFAM" id="SSF50249">
    <property type="entry name" value="Nucleic acid-binding proteins"/>
    <property type="match status" value="1"/>
</dbReference>
<dbReference type="PROSITE" id="PS50862">
    <property type="entry name" value="AA_TRNA_LIGASE_II"/>
    <property type="match status" value="1"/>
</dbReference>
<accession>B0TW08</accession>